<feature type="chain" id="PRO_1000026464" description="Malate dehydrogenase">
    <location>
        <begin position="1"/>
        <end position="312"/>
    </location>
</feature>
<feature type="active site" description="Proton acceptor" evidence="1">
    <location>
        <position position="180"/>
    </location>
</feature>
<feature type="binding site" evidence="1">
    <location>
        <begin position="12"/>
        <end position="17"/>
    </location>
    <ligand>
        <name>NAD(+)</name>
        <dbReference type="ChEBI" id="CHEBI:57540"/>
    </ligand>
</feature>
<feature type="binding site" evidence="1">
    <location>
        <position position="36"/>
    </location>
    <ligand>
        <name>NAD(+)</name>
        <dbReference type="ChEBI" id="CHEBI:57540"/>
    </ligand>
</feature>
<feature type="binding site" evidence="1">
    <location>
        <position position="87"/>
    </location>
    <ligand>
        <name>substrate</name>
    </ligand>
</feature>
<feature type="binding site" evidence="1">
    <location>
        <position position="93"/>
    </location>
    <ligand>
        <name>substrate</name>
    </ligand>
</feature>
<feature type="binding site" evidence="1">
    <location>
        <position position="100"/>
    </location>
    <ligand>
        <name>NAD(+)</name>
        <dbReference type="ChEBI" id="CHEBI:57540"/>
    </ligand>
</feature>
<feature type="binding site" evidence="1">
    <location>
        <begin position="123"/>
        <end position="125"/>
    </location>
    <ligand>
        <name>NAD(+)</name>
        <dbReference type="ChEBI" id="CHEBI:57540"/>
    </ligand>
</feature>
<feature type="binding site" evidence="1">
    <location>
        <position position="125"/>
    </location>
    <ligand>
        <name>substrate</name>
    </ligand>
</feature>
<feature type="binding site" evidence="1">
    <location>
        <position position="156"/>
    </location>
    <ligand>
        <name>substrate</name>
    </ligand>
</feature>
<feature type="modified residue" description="Phosphoserine" evidence="1">
    <location>
        <position position="149"/>
    </location>
</feature>
<organism>
    <name type="scientific">Bacillus thuringiensis (strain Al Hakam)</name>
    <dbReference type="NCBI Taxonomy" id="412694"/>
    <lineage>
        <taxon>Bacteria</taxon>
        <taxon>Bacillati</taxon>
        <taxon>Bacillota</taxon>
        <taxon>Bacilli</taxon>
        <taxon>Bacillales</taxon>
        <taxon>Bacillaceae</taxon>
        <taxon>Bacillus</taxon>
        <taxon>Bacillus cereus group</taxon>
    </lineage>
</organism>
<keyword id="KW-0520">NAD</keyword>
<keyword id="KW-0560">Oxidoreductase</keyword>
<keyword id="KW-0597">Phosphoprotein</keyword>
<keyword id="KW-0816">Tricarboxylic acid cycle</keyword>
<accession>A0RJJ0</accession>
<proteinExistence type="inferred from homology"/>
<gene>
    <name evidence="1" type="primary">mdh</name>
    <name type="ordered locus">BALH_4176</name>
</gene>
<protein>
    <recommendedName>
        <fullName evidence="1">Malate dehydrogenase</fullName>
        <ecNumber evidence="1">1.1.1.37</ecNumber>
    </recommendedName>
</protein>
<evidence type="ECO:0000255" key="1">
    <source>
        <dbReference type="HAMAP-Rule" id="MF_00487"/>
    </source>
</evidence>
<reference key="1">
    <citation type="journal article" date="2007" name="J. Bacteriol.">
        <title>The complete genome sequence of Bacillus thuringiensis Al Hakam.</title>
        <authorList>
            <person name="Challacombe J.F."/>
            <person name="Altherr M.R."/>
            <person name="Xie G."/>
            <person name="Bhotika S.S."/>
            <person name="Brown N."/>
            <person name="Bruce D."/>
            <person name="Campbell C.S."/>
            <person name="Campbell M.L."/>
            <person name="Chen J."/>
            <person name="Chertkov O."/>
            <person name="Cleland C."/>
            <person name="Dimitrijevic M."/>
            <person name="Doggett N.A."/>
            <person name="Fawcett J.J."/>
            <person name="Glavina T."/>
            <person name="Goodwin L.A."/>
            <person name="Green L.D."/>
            <person name="Han C.S."/>
            <person name="Hill K.K."/>
            <person name="Hitchcock P."/>
            <person name="Jackson P.J."/>
            <person name="Keim P."/>
            <person name="Kewalramani A.R."/>
            <person name="Longmire J."/>
            <person name="Lucas S."/>
            <person name="Malfatti S."/>
            <person name="Martinez D."/>
            <person name="McMurry K."/>
            <person name="Meincke L.J."/>
            <person name="Misra M."/>
            <person name="Moseman B.L."/>
            <person name="Mundt M."/>
            <person name="Munk A.C."/>
            <person name="Okinaka R.T."/>
            <person name="Parson-Quintana B."/>
            <person name="Reilly L.P."/>
            <person name="Richardson P."/>
            <person name="Robinson D.L."/>
            <person name="Saunders E."/>
            <person name="Tapia R."/>
            <person name="Tesmer J.G."/>
            <person name="Thayer N."/>
            <person name="Thompson L.S."/>
            <person name="Tice H."/>
            <person name="Ticknor L.O."/>
            <person name="Wills P.L."/>
            <person name="Gilna P."/>
            <person name="Brettin T.S."/>
        </authorList>
    </citation>
    <scope>NUCLEOTIDE SEQUENCE [LARGE SCALE GENOMIC DNA]</scope>
    <source>
        <strain>Al Hakam</strain>
    </source>
</reference>
<name>MDH_BACAH</name>
<comment type="function">
    <text evidence="1">Catalyzes the reversible oxidation of malate to oxaloacetate.</text>
</comment>
<comment type="catalytic activity">
    <reaction evidence="1">
        <text>(S)-malate + NAD(+) = oxaloacetate + NADH + H(+)</text>
        <dbReference type="Rhea" id="RHEA:21432"/>
        <dbReference type="ChEBI" id="CHEBI:15378"/>
        <dbReference type="ChEBI" id="CHEBI:15589"/>
        <dbReference type="ChEBI" id="CHEBI:16452"/>
        <dbReference type="ChEBI" id="CHEBI:57540"/>
        <dbReference type="ChEBI" id="CHEBI:57945"/>
        <dbReference type="EC" id="1.1.1.37"/>
    </reaction>
</comment>
<comment type="similarity">
    <text evidence="1">Belongs to the LDH/MDH superfamily. MDH type 3 family.</text>
</comment>
<sequence>MTIKRKKVSVIGAGFTGATTAFLLAQKELADVVLVDIPQLENPTKGKALDMLEASPVQGFDANIIGTSDYADTADSDVVVITAGIARKPGMSRDDLVATNSKIMKSITRDIAKHSPNAIIVVLTNPVDAMTYSVFKEAGFPKERVIGQSGVLDTARFRTFIAQELNLSVKDITGFVLGGHGDDMVPLVRYSYAGGIPLETLIPKERLEAIVERTRKGGGEIVGLLGNGSAYYAPAASLVEMTEAILKDQRRVLPAIAYLEGEYGYSDLYLGVPVILGGNGIEKIIELELLADEKEALDRSVESVRNVMKVLV</sequence>
<dbReference type="EC" id="1.1.1.37" evidence="1"/>
<dbReference type="EMBL" id="CP000485">
    <property type="protein sequence ID" value="ABK87383.1"/>
    <property type="molecule type" value="Genomic_DNA"/>
</dbReference>
<dbReference type="RefSeq" id="WP_000153232.1">
    <property type="nucleotide sequence ID" value="NC_008600.1"/>
</dbReference>
<dbReference type="SMR" id="A0RJJ0"/>
<dbReference type="GeneID" id="93006518"/>
<dbReference type="KEGG" id="btl:BALH_4176"/>
<dbReference type="HOGENOM" id="CLU_045401_2_1_9"/>
<dbReference type="GO" id="GO:0004459">
    <property type="term" value="F:L-lactate dehydrogenase activity"/>
    <property type="evidence" value="ECO:0007669"/>
    <property type="project" value="TreeGrafter"/>
</dbReference>
<dbReference type="GO" id="GO:0030060">
    <property type="term" value="F:L-malate dehydrogenase (NAD+) activity"/>
    <property type="evidence" value="ECO:0007669"/>
    <property type="project" value="UniProtKB-UniRule"/>
</dbReference>
<dbReference type="GO" id="GO:0006089">
    <property type="term" value="P:lactate metabolic process"/>
    <property type="evidence" value="ECO:0007669"/>
    <property type="project" value="TreeGrafter"/>
</dbReference>
<dbReference type="GO" id="GO:0006099">
    <property type="term" value="P:tricarboxylic acid cycle"/>
    <property type="evidence" value="ECO:0007669"/>
    <property type="project" value="UniProtKB-UniRule"/>
</dbReference>
<dbReference type="CDD" id="cd01339">
    <property type="entry name" value="LDH-like_MDH"/>
    <property type="match status" value="1"/>
</dbReference>
<dbReference type="FunFam" id="3.40.50.720:FF:000018">
    <property type="entry name" value="Malate dehydrogenase"/>
    <property type="match status" value="1"/>
</dbReference>
<dbReference type="FunFam" id="3.90.110.10:FF:000004">
    <property type="entry name" value="Malate dehydrogenase"/>
    <property type="match status" value="1"/>
</dbReference>
<dbReference type="Gene3D" id="3.90.110.10">
    <property type="entry name" value="Lactate dehydrogenase/glycoside hydrolase, family 4, C-terminal"/>
    <property type="match status" value="1"/>
</dbReference>
<dbReference type="Gene3D" id="3.40.50.720">
    <property type="entry name" value="NAD(P)-binding Rossmann-like Domain"/>
    <property type="match status" value="1"/>
</dbReference>
<dbReference type="HAMAP" id="MF_00487">
    <property type="entry name" value="Malate_dehydrog_3"/>
    <property type="match status" value="1"/>
</dbReference>
<dbReference type="InterPro" id="IPR001557">
    <property type="entry name" value="L-lactate/malate_DH"/>
</dbReference>
<dbReference type="InterPro" id="IPR022383">
    <property type="entry name" value="Lactate/malate_DH_C"/>
</dbReference>
<dbReference type="InterPro" id="IPR001236">
    <property type="entry name" value="Lactate/malate_DH_N"/>
</dbReference>
<dbReference type="InterPro" id="IPR015955">
    <property type="entry name" value="Lactate_DH/Glyco_Ohase_4_C"/>
</dbReference>
<dbReference type="InterPro" id="IPR011275">
    <property type="entry name" value="Malate_DH_type3"/>
</dbReference>
<dbReference type="InterPro" id="IPR036291">
    <property type="entry name" value="NAD(P)-bd_dom_sf"/>
</dbReference>
<dbReference type="NCBIfam" id="TIGR01763">
    <property type="entry name" value="MalateDH_bact"/>
    <property type="match status" value="1"/>
</dbReference>
<dbReference type="NCBIfam" id="NF004863">
    <property type="entry name" value="PRK06223.1"/>
    <property type="match status" value="1"/>
</dbReference>
<dbReference type="PANTHER" id="PTHR43128">
    <property type="entry name" value="L-2-HYDROXYCARBOXYLATE DEHYDROGENASE (NAD(P)(+))"/>
    <property type="match status" value="1"/>
</dbReference>
<dbReference type="PANTHER" id="PTHR43128:SF16">
    <property type="entry name" value="L-LACTATE DEHYDROGENASE"/>
    <property type="match status" value="1"/>
</dbReference>
<dbReference type="Pfam" id="PF02866">
    <property type="entry name" value="Ldh_1_C"/>
    <property type="match status" value="1"/>
</dbReference>
<dbReference type="Pfam" id="PF00056">
    <property type="entry name" value="Ldh_1_N"/>
    <property type="match status" value="1"/>
</dbReference>
<dbReference type="PIRSF" id="PIRSF000102">
    <property type="entry name" value="Lac_mal_DH"/>
    <property type="match status" value="1"/>
</dbReference>
<dbReference type="PRINTS" id="PR00086">
    <property type="entry name" value="LLDHDRGNASE"/>
</dbReference>
<dbReference type="SUPFAM" id="SSF56327">
    <property type="entry name" value="LDH C-terminal domain-like"/>
    <property type="match status" value="1"/>
</dbReference>
<dbReference type="SUPFAM" id="SSF51735">
    <property type="entry name" value="NAD(P)-binding Rossmann-fold domains"/>
    <property type="match status" value="1"/>
</dbReference>